<sequence>MALSFFGGGGASHLKYFDIRLDEDYIVFRGGEQEAASAQLSGKLLLCLSEPLSVKHVRLNLTGISRVCWHLPSSSATGGRKSWREKVFYEKSWTFRDAGKSKTEILAAGNYEFPFHVILEGSMPESVEGLSDTYVTYRFKAEIGRKYAKDIVVRKPLRIIRTLDSSALELSHAMSVENIWPNKIEYSISTPTKAVIFGTSIRVDFKLIPLLKGLKIGQIVSQLIESHDLTLNPEDPDSVRNTYKNTRTIVNDEHELDEEGNLEIIDEAAEGYQFSRFLDLPKTLTRCLQDTDTRGIKIRHKLKFRVQLLNPDGHISELRATLPVSIFISPNLAIDDNNNLVDQTPQSAQRAVNDLAQQAPPLYGEHQFDQLYSEVDPSGYRTPGPGSGPGTPFGTLSRNLSAENLASMNALTNTDISASALHSRLSNLHASRFSNPSPSDADGHTDAEYRRLGVSTDSFGPSSGSNSQSPASPELSRRPSDEGYHDHDYIPSGMATPFHPQFAEVESLSRVPSYSTAVRSSVGPCDSELPDYQAVVAEDTAMPTLQSPQQAHIRSVGRGVSTGHTGIDVHHLRSGFFNSRTSAHHDDDDRRLRLVQARARV</sequence>
<accession>Q4WN21</accession>
<protein>
    <recommendedName>
        <fullName>Probable HECT-type ubiquitin ligase-interacting protein creD</fullName>
    </recommendedName>
    <alternativeName>
        <fullName>Carbon catabolite repressor D</fullName>
    </alternativeName>
</protein>
<feature type="chain" id="PRO_0000395698" description="Probable HECT-type ubiquitin ligase-interacting protein creD">
    <location>
        <begin position="1"/>
        <end position="601"/>
    </location>
</feature>
<feature type="region of interest" description="Disordered" evidence="2">
    <location>
        <begin position="374"/>
        <end position="397"/>
    </location>
</feature>
<feature type="region of interest" description="Disordered" evidence="2">
    <location>
        <begin position="454"/>
        <end position="496"/>
    </location>
</feature>
<feature type="compositionally biased region" description="Low complexity" evidence="2">
    <location>
        <begin position="455"/>
        <end position="473"/>
    </location>
</feature>
<feature type="compositionally biased region" description="Basic and acidic residues" evidence="2">
    <location>
        <begin position="475"/>
        <end position="489"/>
    </location>
</feature>
<evidence type="ECO:0000250" key="1"/>
<evidence type="ECO:0000256" key="2">
    <source>
        <dbReference type="SAM" id="MobiDB-lite"/>
    </source>
</evidence>
<evidence type="ECO:0000305" key="3"/>
<name>CRED_ASPFU</name>
<reference key="1">
    <citation type="journal article" date="2005" name="Nature">
        <title>Genomic sequence of the pathogenic and allergenic filamentous fungus Aspergillus fumigatus.</title>
        <authorList>
            <person name="Nierman W.C."/>
            <person name="Pain A."/>
            <person name="Anderson M.J."/>
            <person name="Wortman J.R."/>
            <person name="Kim H.S."/>
            <person name="Arroyo J."/>
            <person name="Berriman M."/>
            <person name="Abe K."/>
            <person name="Archer D.B."/>
            <person name="Bermejo C."/>
            <person name="Bennett J.W."/>
            <person name="Bowyer P."/>
            <person name="Chen D."/>
            <person name="Collins M."/>
            <person name="Coulsen R."/>
            <person name="Davies R."/>
            <person name="Dyer P.S."/>
            <person name="Farman M.L."/>
            <person name="Fedorova N."/>
            <person name="Fedorova N.D."/>
            <person name="Feldblyum T.V."/>
            <person name="Fischer R."/>
            <person name="Fosker N."/>
            <person name="Fraser A."/>
            <person name="Garcia J.L."/>
            <person name="Garcia M.J."/>
            <person name="Goble A."/>
            <person name="Goldman G.H."/>
            <person name="Gomi K."/>
            <person name="Griffith-Jones S."/>
            <person name="Gwilliam R."/>
            <person name="Haas B.J."/>
            <person name="Haas H."/>
            <person name="Harris D.E."/>
            <person name="Horiuchi H."/>
            <person name="Huang J."/>
            <person name="Humphray S."/>
            <person name="Jimenez J."/>
            <person name="Keller N."/>
            <person name="Khouri H."/>
            <person name="Kitamoto K."/>
            <person name="Kobayashi T."/>
            <person name="Konzack S."/>
            <person name="Kulkarni R."/>
            <person name="Kumagai T."/>
            <person name="Lafton A."/>
            <person name="Latge J.-P."/>
            <person name="Li W."/>
            <person name="Lord A."/>
            <person name="Lu C."/>
            <person name="Majoros W.H."/>
            <person name="May G.S."/>
            <person name="Miller B.L."/>
            <person name="Mohamoud Y."/>
            <person name="Molina M."/>
            <person name="Monod M."/>
            <person name="Mouyna I."/>
            <person name="Mulligan S."/>
            <person name="Murphy L.D."/>
            <person name="O'Neil S."/>
            <person name="Paulsen I."/>
            <person name="Penalva M.A."/>
            <person name="Pertea M."/>
            <person name="Price C."/>
            <person name="Pritchard B.L."/>
            <person name="Quail M.A."/>
            <person name="Rabbinowitsch E."/>
            <person name="Rawlins N."/>
            <person name="Rajandream M.A."/>
            <person name="Reichard U."/>
            <person name="Renauld H."/>
            <person name="Robson G.D."/>
            <person name="Rodriguez de Cordoba S."/>
            <person name="Rodriguez-Pena J.M."/>
            <person name="Ronning C.M."/>
            <person name="Rutter S."/>
            <person name="Salzberg S.L."/>
            <person name="Sanchez M."/>
            <person name="Sanchez-Ferrero J.C."/>
            <person name="Saunders D."/>
            <person name="Seeger K."/>
            <person name="Squares R."/>
            <person name="Squares S."/>
            <person name="Takeuchi M."/>
            <person name="Tekaia F."/>
            <person name="Turner G."/>
            <person name="Vazquez de Aldana C.R."/>
            <person name="Weidman J."/>
            <person name="White O."/>
            <person name="Woodward J.R."/>
            <person name="Yu J.-H."/>
            <person name="Fraser C.M."/>
            <person name="Galagan J.E."/>
            <person name="Asai K."/>
            <person name="Machida M."/>
            <person name="Hall N."/>
            <person name="Barrell B.G."/>
            <person name="Denning D.W."/>
        </authorList>
    </citation>
    <scope>NUCLEOTIDE SEQUENCE [LARGE SCALE GENOMIC DNA]</scope>
    <source>
        <strain>ATCC MYA-4609 / CBS 101355 / FGSC A1100 / Af293</strain>
    </source>
</reference>
<keyword id="KW-1185">Reference proteome</keyword>
<keyword id="KW-0833">Ubl conjugation pathway</keyword>
<organism>
    <name type="scientific">Aspergillus fumigatus (strain ATCC MYA-4609 / CBS 101355 / FGSC A1100 / Af293)</name>
    <name type="common">Neosartorya fumigata</name>
    <dbReference type="NCBI Taxonomy" id="330879"/>
    <lineage>
        <taxon>Eukaryota</taxon>
        <taxon>Fungi</taxon>
        <taxon>Dikarya</taxon>
        <taxon>Ascomycota</taxon>
        <taxon>Pezizomycotina</taxon>
        <taxon>Eurotiomycetes</taxon>
        <taxon>Eurotiomycetidae</taxon>
        <taxon>Eurotiales</taxon>
        <taxon>Aspergillaceae</taxon>
        <taxon>Aspergillus</taxon>
        <taxon>Aspergillus subgen. Fumigati</taxon>
    </lineage>
</organism>
<comment type="function">
    <text evidence="1">Component of the regulatory network controlling carbon source utilization through ubiquitination and deubiquitination involving creA, creB, creC, creD and acrB. May be involved in signaling by recognizing appropriately phosphorylated substrates via its arrestin domains and then recruit a HECT-type ubiquitin ligase such as hulA, leading to ubiquitination of the substrate, providing a link between ubiquitination and phosphorylation in protein regulation and stability (By similarity).</text>
</comment>
<comment type="subunit">
    <text evidence="1">Interacts with hulA.</text>
</comment>
<comment type="similarity">
    <text evidence="3">Belongs to the arrestin family.</text>
</comment>
<gene>
    <name type="primary">creD</name>
    <name type="ORF">AFUA_6G07900</name>
</gene>
<dbReference type="EMBL" id="AAHF01000006">
    <property type="protein sequence ID" value="EAL88643.1"/>
    <property type="molecule type" value="Genomic_DNA"/>
</dbReference>
<dbReference type="RefSeq" id="XP_750681.1">
    <property type="nucleotide sequence ID" value="XM_745588.1"/>
</dbReference>
<dbReference type="SMR" id="Q4WN21"/>
<dbReference type="FunCoup" id="Q4WN21">
    <property type="interactions" value="79"/>
</dbReference>
<dbReference type="STRING" id="330879.Q4WN21"/>
<dbReference type="GeneID" id="3508824"/>
<dbReference type="KEGG" id="afm:AFUA_6G07900"/>
<dbReference type="VEuPathDB" id="FungiDB:Afu6g07900"/>
<dbReference type="eggNOG" id="KOG3780">
    <property type="taxonomic scope" value="Eukaryota"/>
</dbReference>
<dbReference type="HOGENOM" id="CLU_018982_2_0_1"/>
<dbReference type="InParanoid" id="Q4WN21"/>
<dbReference type="OrthoDB" id="2333384at2759"/>
<dbReference type="Proteomes" id="UP000002530">
    <property type="component" value="Chromosome 6"/>
</dbReference>
<dbReference type="GO" id="GO:0005737">
    <property type="term" value="C:cytoplasm"/>
    <property type="evidence" value="ECO:0000318"/>
    <property type="project" value="GO_Central"/>
</dbReference>
<dbReference type="GO" id="GO:0005829">
    <property type="term" value="C:cytosol"/>
    <property type="evidence" value="ECO:0000318"/>
    <property type="project" value="GO_Central"/>
</dbReference>
<dbReference type="GO" id="GO:0005886">
    <property type="term" value="C:plasma membrane"/>
    <property type="evidence" value="ECO:0000318"/>
    <property type="project" value="GO_Central"/>
</dbReference>
<dbReference type="GO" id="GO:0030674">
    <property type="term" value="F:protein-macromolecule adaptor activity"/>
    <property type="evidence" value="ECO:0000318"/>
    <property type="project" value="GO_Central"/>
</dbReference>
<dbReference type="GO" id="GO:0031625">
    <property type="term" value="F:ubiquitin protein ligase binding"/>
    <property type="evidence" value="ECO:0000318"/>
    <property type="project" value="GO_Central"/>
</dbReference>
<dbReference type="GO" id="GO:0031396">
    <property type="term" value="P:regulation of protein ubiquitination"/>
    <property type="evidence" value="ECO:0000250"/>
    <property type="project" value="UniProtKB"/>
</dbReference>
<dbReference type="GO" id="GO:0070086">
    <property type="term" value="P:ubiquitin-dependent endocytosis"/>
    <property type="evidence" value="ECO:0000318"/>
    <property type="project" value="GO_Central"/>
</dbReference>
<dbReference type="FunFam" id="2.60.40.640:FF:000018">
    <property type="entry name" value="HECT-type ubiquitin ligase-interacting protein creD"/>
    <property type="match status" value="1"/>
</dbReference>
<dbReference type="Gene3D" id="2.60.40.640">
    <property type="match status" value="1"/>
</dbReference>
<dbReference type="InterPro" id="IPR014752">
    <property type="entry name" value="Arrestin-like_C"/>
</dbReference>
<dbReference type="InterPro" id="IPR011021">
    <property type="entry name" value="Arrestin-like_N"/>
</dbReference>
<dbReference type="InterPro" id="IPR011022">
    <property type="entry name" value="Arrestin_C-like"/>
</dbReference>
<dbReference type="InterPro" id="IPR050357">
    <property type="entry name" value="Arrestin_domain-protein"/>
</dbReference>
<dbReference type="InterPro" id="IPR014756">
    <property type="entry name" value="Ig_E-set"/>
</dbReference>
<dbReference type="PANTHER" id="PTHR11188">
    <property type="entry name" value="ARRESTIN DOMAIN CONTAINING PROTEIN"/>
    <property type="match status" value="1"/>
</dbReference>
<dbReference type="PANTHER" id="PTHR11188:SF17">
    <property type="entry name" value="FI21816P1"/>
    <property type="match status" value="1"/>
</dbReference>
<dbReference type="Pfam" id="PF02752">
    <property type="entry name" value="Arrestin_C"/>
    <property type="match status" value="1"/>
</dbReference>
<dbReference type="Pfam" id="PF00339">
    <property type="entry name" value="Arrestin_N"/>
    <property type="match status" value="1"/>
</dbReference>
<dbReference type="SMART" id="SM01017">
    <property type="entry name" value="Arrestin_C"/>
    <property type="match status" value="1"/>
</dbReference>
<dbReference type="SUPFAM" id="SSF81296">
    <property type="entry name" value="E set domains"/>
    <property type="match status" value="1"/>
</dbReference>
<proteinExistence type="inferred from homology"/>